<feature type="chain" id="PRO_0000436977" description="Probable transcription factor At1g55950">
    <location>
        <begin position="1"/>
        <end position="219"/>
    </location>
</feature>
<feature type="region of interest" description="Disordered" evidence="1">
    <location>
        <begin position="9"/>
        <end position="77"/>
    </location>
</feature>
<feature type="compositionally biased region" description="Basic residues" evidence="1">
    <location>
        <begin position="17"/>
        <end position="30"/>
    </location>
</feature>
<feature type="compositionally biased region" description="Basic and acidic residues" evidence="1">
    <location>
        <begin position="31"/>
        <end position="48"/>
    </location>
</feature>
<feature type="compositionally biased region" description="Acidic residues" evidence="1">
    <location>
        <begin position="65"/>
        <end position="77"/>
    </location>
</feature>
<name>STKLC_ARATH</name>
<keyword id="KW-1185">Reference proteome</keyword>
<keyword id="KW-0804">Transcription</keyword>
<keyword id="KW-0805">Transcription regulation</keyword>
<sequence>MKRITKLLASHSLKSLMAKKNKRSQQKNKCLKPEKDPSTVKRLLEDPPRKKRYLQPLENPPTESYGDDEKMETEEEGEKYLGKNLPASAFIIVAAERHDSDSYSETELEKKICGSVVVAKMNDDKMVSTDTKKKYFQRILSDDDKIVLLQGMVDFQNDKGTISYDDMTGFIDTVKNIISFQANSRQFTTKIRRLKDKFVQKRNKGVDENSLANVEIYEI</sequence>
<organism>
    <name type="scientific">Arabidopsis thaliana</name>
    <name type="common">Mouse-ear cress</name>
    <dbReference type="NCBI Taxonomy" id="3702"/>
    <lineage>
        <taxon>Eukaryota</taxon>
        <taxon>Viridiplantae</taxon>
        <taxon>Streptophyta</taxon>
        <taxon>Embryophyta</taxon>
        <taxon>Tracheophyta</taxon>
        <taxon>Spermatophyta</taxon>
        <taxon>Magnoliopsida</taxon>
        <taxon>eudicotyledons</taxon>
        <taxon>Gunneridae</taxon>
        <taxon>Pentapetalae</taxon>
        <taxon>rosids</taxon>
        <taxon>malvids</taxon>
        <taxon>Brassicales</taxon>
        <taxon>Brassicaceae</taxon>
        <taxon>Camelineae</taxon>
        <taxon>Arabidopsis</taxon>
    </lineage>
</organism>
<protein>
    <recommendedName>
        <fullName evidence="2">Probable transcription factor At1g55950</fullName>
    </recommendedName>
    <alternativeName>
        <fullName evidence="2">Storekeeper-like protein At1g55950</fullName>
    </alternativeName>
</protein>
<gene>
    <name evidence="3" type="ordered locus">At1g55950</name>
    <name evidence="4" type="ORF">F14J16.23</name>
</gene>
<reference key="1">
    <citation type="journal article" date="2000" name="Nature">
        <title>Sequence and analysis of chromosome 1 of the plant Arabidopsis thaliana.</title>
        <authorList>
            <person name="Theologis A."/>
            <person name="Ecker J.R."/>
            <person name="Palm C.J."/>
            <person name="Federspiel N.A."/>
            <person name="Kaul S."/>
            <person name="White O."/>
            <person name="Alonso J."/>
            <person name="Altafi H."/>
            <person name="Araujo R."/>
            <person name="Bowman C.L."/>
            <person name="Brooks S.Y."/>
            <person name="Buehler E."/>
            <person name="Chan A."/>
            <person name="Chao Q."/>
            <person name="Chen H."/>
            <person name="Cheuk R.F."/>
            <person name="Chin C.W."/>
            <person name="Chung M.K."/>
            <person name="Conn L."/>
            <person name="Conway A.B."/>
            <person name="Conway A.R."/>
            <person name="Creasy T.H."/>
            <person name="Dewar K."/>
            <person name="Dunn P."/>
            <person name="Etgu P."/>
            <person name="Feldblyum T.V."/>
            <person name="Feng J.-D."/>
            <person name="Fong B."/>
            <person name="Fujii C.Y."/>
            <person name="Gill J.E."/>
            <person name="Goldsmith A.D."/>
            <person name="Haas B."/>
            <person name="Hansen N.F."/>
            <person name="Hughes B."/>
            <person name="Huizar L."/>
            <person name="Hunter J.L."/>
            <person name="Jenkins J."/>
            <person name="Johnson-Hopson C."/>
            <person name="Khan S."/>
            <person name="Khaykin E."/>
            <person name="Kim C.J."/>
            <person name="Koo H.L."/>
            <person name="Kremenetskaia I."/>
            <person name="Kurtz D.B."/>
            <person name="Kwan A."/>
            <person name="Lam B."/>
            <person name="Langin-Hooper S."/>
            <person name="Lee A."/>
            <person name="Lee J.M."/>
            <person name="Lenz C.A."/>
            <person name="Li J.H."/>
            <person name="Li Y.-P."/>
            <person name="Lin X."/>
            <person name="Liu S.X."/>
            <person name="Liu Z.A."/>
            <person name="Luros J.S."/>
            <person name="Maiti R."/>
            <person name="Marziali A."/>
            <person name="Militscher J."/>
            <person name="Miranda M."/>
            <person name="Nguyen M."/>
            <person name="Nierman W.C."/>
            <person name="Osborne B.I."/>
            <person name="Pai G."/>
            <person name="Peterson J."/>
            <person name="Pham P.K."/>
            <person name="Rizzo M."/>
            <person name="Rooney T."/>
            <person name="Rowley D."/>
            <person name="Sakano H."/>
            <person name="Salzberg S.L."/>
            <person name="Schwartz J.R."/>
            <person name="Shinn P."/>
            <person name="Southwick A.M."/>
            <person name="Sun H."/>
            <person name="Tallon L.J."/>
            <person name="Tambunga G."/>
            <person name="Toriumi M.J."/>
            <person name="Town C.D."/>
            <person name="Utterback T."/>
            <person name="Van Aken S."/>
            <person name="Vaysberg M."/>
            <person name="Vysotskaia V.S."/>
            <person name="Walker M."/>
            <person name="Wu D."/>
            <person name="Yu G."/>
            <person name="Fraser C.M."/>
            <person name="Venter J.C."/>
            <person name="Davis R.W."/>
        </authorList>
    </citation>
    <scope>NUCLEOTIDE SEQUENCE [LARGE SCALE GENOMIC DNA]</scope>
    <source>
        <strain>cv. Columbia</strain>
    </source>
</reference>
<reference key="2">
    <citation type="journal article" date="2017" name="Plant J.">
        <title>Araport11: a complete reannotation of the Arabidopsis thaliana reference genome.</title>
        <authorList>
            <person name="Cheng C.Y."/>
            <person name="Krishnakumar V."/>
            <person name="Chan A.P."/>
            <person name="Thibaud-Nissen F."/>
            <person name="Schobel S."/>
            <person name="Town C.D."/>
        </authorList>
    </citation>
    <scope>GENOME REANNOTATION</scope>
    <source>
        <strain>cv. Columbia</strain>
    </source>
</reference>
<comment type="interaction">
    <interactant intactId="EBI-15192337">
        <id>Q9LG15</id>
    </interactant>
    <interactant intactId="EBI-15192335">
        <id>C0SUW7</id>
        <label>ARID6</label>
    </interactant>
    <organismsDiffer>false</organismsDiffer>
    <experiments>4</experiments>
</comment>
<comment type="similarity">
    <text evidence="2">Belongs to the GeBP family.</text>
</comment>
<comment type="sequence caution" evidence="2">
    <conflict type="erroneous initiation">
        <sequence resource="EMBL-CDS" id="AAF79333"/>
    </conflict>
    <text>Truncated N-terminus.</text>
</comment>
<comment type="online information" name="Plant Transcription Factor Database">
    <link uri="https://planttfdb.gao-lab.org/family.php?fam=GeBP#family_intro"/>
</comment>
<accession>Q9LG15</accession>
<evidence type="ECO:0000256" key="1">
    <source>
        <dbReference type="SAM" id="MobiDB-lite"/>
    </source>
</evidence>
<evidence type="ECO:0000305" key="2"/>
<evidence type="ECO:0000312" key="3">
    <source>
        <dbReference type="Araport" id="AT1G55950"/>
    </source>
</evidence>
<evidence type="ECO:0000312" key="4">
    <source>
        <dbReference type="EMBL" id="AAF79333.1"/>
    </source>
</evidence>
<proteinExistence type="evidence at protein level"/>
<dbReference type="EMBL" id="AC002304">
    <property type="protein sequence ID" value="AAF79333.1"/>
    <property type="status" value="ALT_INIT"/>
    <property type="molecule type" value="Genomic_DNA"/>
</dbReference>
<dbReference type="EMBL" id="CP002684">
    <property type="protein sequence ID" value="AEE33324.2"/>
    <property type="molecule type" value="Genomic_DNA"/>
</dbReference>
<dbReference type="RefSeq" id="NP_175991.2">
    <property type="nucleotide sequence ID" value="NM_104473.2"/>
</dbReference>
<dbReference type="IntAct" id="Q9LG15">
    <property type="interactions" value="5"/>
</dbReference>
<dbReference type="STRING" id="3702.Q9LG15"/>
<dbReference type="iPTMnet" id="Q9LG15"/>
<dbReference type="PaxDb" id="3702-AT1G55950.1"/>
<dbReference type="DNASU" id="842046"/>
<dbReference type="EnsemblPlants" id="AT1G55950.1">
    <property type="protein sequence ID" value="AT1G55950.1"/>
    <property type="gene ID" value="AT1G55950"/>
</dbReference>
<dbReference type="GeneID" id="842046"/>
<dbReference type="Gramene" id="AT1G55950.1">
    <property type="protein sequence ID" value="AT1G55950.1"/>
    <property type="gene ID" value="AT1G55950"/>
</dbReference>
<dbReference type="KEGG" id="ath:AT1G55950"/>
<dbReference type="Araport" id="AT1G55950"/>
<dbReference type="TAIR" id="AT1G55950"/>
<dbReference type="HOGENOM" id="CLU_1350545_0_0_1"/>
<dbReference type="InParanoid" id="Q9LG15"/>
<dbReference type="OMA" id="SFQANSR"/>
<dbReference type="PhylomeDB" id="Q9LG15"/>
<dbReference type="PRO" id="PR:Q9LG15"/>
<dbReference type="Proteomes" id="UP000006548">
    <property type="component" value="Chromosome 1"/>
</dbReference>
<dbReference type="ExpressionAtlas" id="Q9LG15">
    <property type="expression patterns" value="baseline and differential"/>
</dbReference>
<dbReference type="GO" id="GO:0006355">
    <property type="term" value="P:regulation of DNA-templated transcription"/>
    <property type="evidence" value="ECO:0007669"/>
    <property type="project" value="InterPro"/>
</dbReference>
<dbReference type="InterPro" id="IPR007592">
    <property type="entry name" value="GEBP"/>
</dbReference>
<dbReference type="InterPro" id="IPR053932">
    <property type="entry name" value="GeBP-like_DBD"/>
</dbReference>
<dbReference type="PANTHER" id="PTHR31662">
    <property type="entry name" value="BNAANNG10740D PROTEIN-RELATED"/>
    <property type="match status" value="1"/>
</dbReference>
<dbReference type="PANTHER" id="PTHR31662:SF68">
    <property type="entry name" value="DNA-BINDING STOREKEEPER PROTEIN TRANSCRIPTIONAL REGULATOR-LIKE PROTEIN-RELATED"/>
    <property type="match status" value="1"/>
</dbReference>
<dbReference type="Pfam" id="PF04504">
    <property type="entry name" value="GeBP-like_DBD"/>
    <property type="match status" value="1"/>
</dbReference>